<evidence type="ECO:0000255" key="1">
    <source>
        <dbReference type="HAMAP-Rule" id="MF_00188"/>
    </source>
</evidence>
<protein>
    <recommendedName>
        <fullName evidence="1">Protease HtpX</fullName>
        <ecNumber evidence="1">3.4.24.-</ecNumber>
    </recommendedName>
    <alternativeName>
        <fullName evidence="1">Heat shock protein HtpX</fullName>
    </alternativeName>
</protein>
<proteinExistence type="inferred from homology"/>
<keyword id="KW-0997">Cell inner membrane</keyword>
<keyword id="KW-1003">Cell membrane</keyword>
<keyword id="KW-0378">Hydrolase</keyword>
<keyword id="KW-0472">Membrane</keyword>
<keyword id="KW-0479">Metal-binding</keyword>
<keyword id="KW-0482">Metalloprotease</keyword>
<keyword id="KW-0645">Protease</keyword>
<keyword id="KW-1185">Reference proteome</keyword>
<keyword id="KW-0812">Transmembrane</keyword>
<keyword id="KW-1133">Transmembrane helix</keyword>
<keyword id="KW-0862">Zinc</keyword>
<sequence>MIKRVILFLATNLAVLLVLSISMRLLGIESLLNQQGTDLNLNALLIFAAIIGFSGSLISLAISKFTAKRLTGAQVIERPRSTTEVWLLETVQRHARMAGIGMPEVAIYASPEPNAFATGWNRNAALVAVSSGLLEQMNQNEVEAVLGHEISHVANGDMVTLALIQGVVNTFVIFLARIIGHLVDRVVFKTERGYGPAFFITTLIAQTVLAILASLIVLWFSRQREFRADAGGAQLAGKEKMIAALERLGRMAQEGLPEQLQAFGIAGGERSQGWKRLFMSHPPIEERIAALRAEH</sequence>
<comment type="cofactor">
    <cofactor evidence="1">
        <name>Zn(2+)</name>
        <dbReference type="ChEBI" id="CHEBI:29105"/>
    </cofactor>
    <text evidence="1">Binds 1 zinc ion per subunit.</text>
</comment>
<comment type="subcellular location">
    <subcellularLocation>
        <location evidence="1">Cell inner membrane</location>
        <topology evidence="1">Multi-pass membrane protein</topology>
    </subcellularLocation>
</comment>
<comment type="similarity">
    <text evidence="1">Belongs to the peptidase M48B family.</text>
</comment>
<feature type="chain" id="PRO_1000020901" description="Protease HtpX">
    <location>
        <begin position="1"/>
        <end position="295"/>
    </location>
</feature>
<feature type="transmembrane region" description="Helical" evidence="1">
    <location>
        <begin position="5"/>
        <end position="25"/>
    </location>
</feature>
<feature type="transmembrane region" description="Helical" evidence="1">
    <location>
        <begin position="43"/>
        <end position="63"/>
    </location>
</feature>
<feature type="transmembrane region" description="Helical" evidence="1">
    <location>
        <begin position="159"/>
        <end position="179"/>
    </location>
</feature>
<feature type="transmembrane region" description="Helical" evidence="1">
    <location>
        <begin position="198"/>
        <end position="218"/>
    </location>
</feature>
<feature type="active site" evidence="1">
    <location>
        <position position="149"/>
    </location>
</feature>
<feature type="binding site" evidence="1">
    <location>
        <position position="148"/>
    </location>
    <ligand>
        <name>Zn(2+)</name>
        <dbReference type="ChEBI" id="CHEBI:29105"/>
        <note>catalytic</note>
    </ligand>
</feature>
<feature type="binding site" evidence="1">
    <location>
        <position position="152"/>
    </location>
    <ligand>
        <name>Zn(2+)</name>
        <dbReference type="ChEBI" id="CHEBI:29105"/>
        <note>catalytic</note>
    </ligand>
</feature>
<feature type="binding site" evidence="1">
    <location>
        <position position="225"/>
    </location>
    <ligand>
        <name>Zn(2+)</name>
        <dbReference type="ChEBI" id="CHEBI:29105"/>
        <note>catalytic</note>
    </ligand>
</feature>
<organism>
    <name type="scientific">Nitrosococcus oceani (strain ATCC 19707 / BCRC 17464 / JCM 30415 / NCIMB 11848 / C-107)</name>
    <dbReference type="NCBI Taxonomy" id="323261"/>
    <lineage>
        <taxon>Bacteria</taxon>
        <taxon>Pseudomonadati</taxon>
        <taxon>Pseudomonadota</taxon>
        <taxon>Gammaproteobacteria</taxon>
        <taxon>Chromatiales</taxon>
        <taxon>Chromatiaceae</taxon>
        <taxon>Nitrosococcus</taxon>
    </lineage>
</organism>
<accession>Q3JE43</accession>
<dbReference type="EC" id="3.4.24.-" evidence="1"/>
<dbReference type="EMBL" id="CP000127">
    <property type="protein sequence ID" value="ABA56903.1"/>
    <property type="molecule type" value="Genomic_DNA"/>
</dbReference>
<dbReference type="RefSeq" id="WP_002813917.1">
    <property type="nucleotide sequence ID" value="NC_007484.1"/>
</dbReference>
<dbReference type="SMR" id="Q3JE43"/>
<dbReference type="FunCoup" id="Q3JE43">
    <property type="interactions" value="250"/>
</dbReference>
<dbReference type="STRING" id="323261.Noc_0377"/>
<dbReference type="MEROPS" id="M48.002"/>
<dbReference type="KEGG" id="noc:Noc_0377"/>
<dbReference type="eggNOG" id="COG0501">
    <property type="taxonomic scope" value="Bacteria"/>
</dbReference>
<dbReference type="HOGENOM" id="CLU_042266_1_0_6"/>
<dbReference type="InParanoid" id="Q3JE43"/>
<dbReference type="Proteomes" id="UP000006838">
    <property type="component" value="Chromosome"/>
</dbReference>
<dbReference type="GO" id="GO:0005886">
    <property type="term" value="C:plasma membrane"/>
    <property type="evidence" value="ECO:0007669"/>
    <property type="project" value="UniProtKB-SubCell"/>
</dbReference>
<dbReference type="GO" id="GO:0004222">
    <property type="term" value="F:metalloendopeptidase activity"/>
    <property type="evidence" value="ECO:0007669"/>
    <property type="project" value="UniProtKB-UniRule"/>
</dbReference>
<dbReference type="GO" id="GO:0008270">
    <property type="term" value="F:zinc ion binding"/>
    <property type="evidence" value="ECO:0007669"/>
    <property type="project" value="UniProtKB-UniRule"/>
</dbReference>
<dbReference type="GO" id="GO:0006508">
    <property type="term" value="P:proteolysis"/>
    <property type="evidence" value="ECO:0007669"/>
    <property type="project" value="UniProtKB-KW"/>
</dbReference>
<dbReference type="CDD" id="cd07335">
    <property type="entry name" value="M48B_HtpX_like"/>
    <property type="match status" value="1"/>
</dbReference>
<dbReference type="Gene3D" id="3.30.2010.10">
    <property type="entry name" value="Metalloproteases ('zincins'), catalytic domain"/>
    <property type="match status" value="1"/>
</dbReference>
<dbReference type="HAMAP" id="MF_00188">
    <property type="entry name" value="Pept_M48_protease_HtpX"/>
    <property type="match status" value="1"/>
</dbReference>
<dbReference type="InterPro" id="IPR050083">
    <property type="entry name" value="HtpX_protease"/>
</dbReference>
<dbReference type="InterPro" id="IPR022919">
    <property type="entry name" value="Pept_M48_protease_HtpX"/>
</dbReference>
<dbReference type="InterPro" id="IPR001915">
    <property type="entry name" value="Peptidase_M48"/>
</dbReference>
<dbReference type="NCBIfam" id="NF003965">
    <property type="entry name" value="PRK05457.1"/>
    <property type="match status" value="1"/>
</dbReference>
<dbReference type="PANTHER" id="PTHR43221">
    <property type="entry name" value="PROTEASE HTPX"/>
    <property type="match status" value="1"/>
</dbReference>
<dbReference type="PANTHER" id="PTHR43221:SF1">
    <property type="entry name" value="PROTEASE HTPX"/>
    <property type="match status" value="1"/>
</dbReference>
<dbReference type="Pfam" id="PF01435">
    <property type="entry name" value="Peptidase_M48"/>
    <property type="match status" value="1"/>
</dbReference>
<reference key="1">
    <citation type="journal article" date="2006" name="Appl. Environ. Microbiol.">
        <title>Complete genome sequence of the marine, chemolithoautotrophic, ammonia-oxidizing bacterium Nitrosococcus oceani ATCC 19707.</title>
        <authorList>
            <person name="Klotz M.G."/>
            <person name="Arp D.J."/>
            <person name="Chain P.S.G."/>
            <person name="El-Sheikh A.F."/>
            <person name="Hauser L.J."/>
            <person name="Hommes N.G."/>
            <person name="Larimer F.W."/>
            <person name="Malfatti S.A."/>
            <person name="Norton J.M."/>
            <person name="Poret-Peterson A.T."/>
            <person name="Vergez L.M."/>
            <person name="Ward B.B."/>
        </authorList>
    </citation>
    <scope>NUCLEOTIDE SEQUENCE [LARGE SCALE GENOMIC DNA]</scope>
    <source>
        <strain>ATCC 19707 / BCRC 17464 / JCM 30415 / NCIMB 11848 / C-107</strain>
    </source>
</reference>
<gene>
    <name evidence="1" type="primary">htpX</name>
    <name type="ordered locus">Noc_0377</name>
</gene>
<name>HTPX_NITOC</name>